<dbReference type="EC" id="7.1.1.-" evidence="1"/>
<dbReference type="EMBL" id="D42186">
    <property type="protein sequence ID" value="BAA44986.1"/>
    <property type="molecule type" value="Genomic_DNA"/>
</dbReference>
<dbReference type="EMBL" id="AP008231">
    <property type="protein sequence ID" value="BAD79294.1"/>
    <property type="molecule type" value="Genomic_DNA"/>
</dbReference>
<dbReference type="SMR" id="Q5N326"/>
<dbReference type="KEGG" id="syc:syc1104_d"/>
<dbReference type="eggNOG" id="ENOG5032ZM4">
    <property type="taxonomic scope" value="Bacteria"/>
</dbReference>
<dbReference type="Proteomes" id="UP000001175">
    <property type="component" value="Chromosome"/>
</dbReference>
<dbReference type="GO" id="GO:0031676">
    <property type="term" value="C:plasma membrane-derived thylakoid membrane"/>
    <property type="evidence" value="ECO:0007669"/>
    <property type="project" value="UniProtKB-SubCell"/>
</dbReference>
<dbReference type="GO" id="GO:0016655">
    <property type="term" value="F:oxidoreductase activity, acting on NAD(P)H, quinone or similar compound as acceptor"/>
    <property type="evidence" value="ECO:0007669"/>
    <property type="project" value="UniProtKB-UniRule"/>
</dbReference>
<dbReference type="GO" id="GO:0048038">
    <property type="term" value="F:quinone binding"/>
    <property type="evidence" value="ECO:0007669"/>
    <property type="project" value="UniProtKB-KW"/>
</dbReference>
<dbReference type="HAMAP" id="MF_01355">
    <property type="entry name" value="NDH1_NDH1L"/>
    <property type="match status" value="1"/>
</dbReference>
<dbReference type="InterPro" id="IPR019654">
    <property type="entry name" value="NADH-quinone_OxRdatse_su_L"/>
</dbReference>
<dbReference type="PANTHER" id="PTHR36727">
    <property type="entry name" value="NAD(P)H-QUINONE OXIDOREDUCTASE SUBUNIT L, CHLOROPLASTIC"/>
    <property type="match status" value="1"/>
</dbReference>
<dbReference type="PANTHER" id="PTHR36727:SF2">
    <property type="entry name" value="NAD(P)H-QUINONE OXIDOREDUCTASE SUBUNIT L, CHLOROPLASTIC"/>
    <property type="match status" value="1"/>
</dbReference>
<dbReference type="Pfam" id="PF10716">
    <property type="entry name" value="NdhL"/>
    <property type="match status" value="1"/>
</dbReference>
<name>NDHL_SYNP6</name>
<organism>
    <name type="scientific">Synechococcus sp. (strain ATCC 27144 / PCC 6301 / SAUG 1402/1)</name>
    <name type="common">Anacystis nidulans</name>
    <dbReference type="NCBI Taxonomy" id="269084"/>
    <lineage>
        <taxon>Bacteria</taxon>
        <taxon>Bacillati</taxon>
        <taxon>Cyanobacteriota</taxon>
        <taxon>Cyanophyceae</taxon>
        <taxon>Synechococcales</taxon>
        <taxon>Synechococcaceae</taxon>
        <taxon>Synechococcus</taxon>
    </lineage>
</organism>
<sequence>MTVTLIIAALYLALAGAYLLVVPAALYLYLQKRWYVASSWERAFMYFLVFFFFPGLLLLAPLLNFRPRSRQIPA</sequence>
<reference key="1">
    <citation type="journal article" date="1995" name="DNA Res.">
        <title>Genes encoding the group I intron-containing tRNA Leu and subunit L of NADH dehydrogenase from the cyanobacterium Synechococcus PCC 6301.</title>
        <authorList>
            <person name="Sugita M."/>
            <person name="Luo L."/>
            <person name="Ohta M."/>
            <person name="Itadani H."/>
            <person name="Matsubayashi T."/>
            <person name="Sugiura M."/>
        </authorList>
    </citation>
    <scope>NUCLEOTIDE SEQUENCE [GENOMIC DNA]</scope>
</reference>
<reference key="2">
    <citation type="journal article" date="2007" name="Photosyn. Res.">
        <title>Complete nucleotide sequence of the freshwater unicellular cyanobacterium Synechococcus elongatus PCC 6301 chromosome: gene content and organization.</title>
        <authorList>
            <person name="Sugita C."/>
            <person name="Ogata K."/>
            <person name="Shikata M."/>
            <person name="Jikuya H."/>
            <person name="Takano J."/>
            <person name="Furumichi M."/>
            <person name="Kanehisa M."/>
            <person name="Omata T."/>
            <person name="Sugiura M."/>
            <person name="Sugita M."/>
        </authorList>
    </citation>
    <scope>NUCLEOTIDE SEQUENCE [LARGE SCALE GENOMIC DNA]</scope>
    <source>
        <strain>ATCC 27144 / PCC 6301 / SAUG 1402/1</strain>
    </source>
</reference>
<feature type="chain" id="PRO_0000353685" description="NAD(P)H-quinone oxidoreductase subunit L">
    <location>
        <begin position="1"/>
        <end position="74"/>
    </location>
</feature>
<feature type="transmembrane region" description="Helical" evidence="1">
    <location>
        <begin position="5"/>
        <end position="25"/>
    </location>
</feature>
<feature type="transmembrane region" description="Helical" evidence="1">
    <location>
        <begin position="43"/>
        <end position="63"/>
    </location>
</feature>
<keyword id="KW-0472">Membrane</keyword>
<keyword id="KW-0520">NAD</keyword>
<keyword id="KW-0521">NADP</keyword>
<keyword id="KW-0618">Plastoquinone</keyword>
<keyword id="KW-0874">Quinone</keyword>
<keyword id="KW-0793">Thylakoid</keyword>
<keyword id="KW-1278">Translocase</keyword>
<keyword id="KW-0812">Transmembrane</keyword>
<keyword id="KW-1133">Transmembrane helix</keyword>
<keyword id="KW-0813">Transport</keyword>
<protein>
    <recommendedName>
        <fullName evidence="1">NAD(P)H-quinone oxidoreductase subunit L</fullName>
        <ecNumber evidence="1">7.1.1.-</ecNumber>
    </recommendedName>
    <alternativeName>
        <fullName evidence="1">NAD(P)H dehydrogenase I subunit L</fullName>
    </alternativeName>
    <alternativeName>
        <fullName>NDH-1 subunit L</fullName>
    </alternativeName>
    <alternativeName>
        <fullName>NDH-L</fullName>
    </alternativeName>
</protein>
<evidence type="ECO:0000255" key="1">
    <source>
        <dbReference type="HAMAP-Rule" id="MF_01355"/>
    </source>
</evidence>
<comment type="function">
    <text evidence="1">NDH-1 shuttles electrons from an unknown electron donor, via FMN and iron-sulfur (Fe-S) centers, to quinones in the respiratory and/or the photosynthetic chain. The immediate electron acceptor for the enzyme in this species is believed to be plastoquinone. Couples the redox reaction to proton translocation, and thus conserves the redox energy in a proton gradient. Cyanobacterial NDH-1 also plays a role in inorganic carbon-concentration.</text>
</comment>
<comment type="catalytic activity">
    <reaction evidence="1">
        <text>a plastoquinone + NADH + (n+1) H(+)(in) = a plastoquinol + NAD(+) + n H(+)(out)</text>
        <dbReference type="Rhea" id="RHEA:42608"/>
        <dbReference type="Rhea" id="RHEA-COMP:9561"/>
        <dbReference type="Rhea" id="RHEA-COMP:9562"/>
        <dbReference type="ChEBI" id="CHEBI:15378"/>
        <dbReference type="ChEBI" id="CHEBI:17757"/>
        <dbReference type="ChEBI" id="CHEBI:57540"/>
        <dbReference type="ChEBI" id="CHEBI:57945"/>
        <dbReference type="ChEBI" id="CHEBI:62192"/>
    </reaction>
</comment>
<comment type="catalytic activity">
    <reaction evidence="1">
        <text>a plastoquinone + NADPH + (n+1) H(+)(in) = a plastoquinol + NADP(+) + n H(+)(out)</text>
        <dbReference type="Rhea" id="RHEA:42612"/>
        <dbReference type="Rhea" id="RHEA-COMP:9561"/>
        <dbReference type="Rhea" id="RHEA-COMP:9562"/>
        <dbReference type="ChEBI" id="CHEBI:15378"/>
        <dbReference type="ChEBI" id="CHEBI:17757"/>
        <dbReference type="ChEBI" id="CHEBI:57783"/>
        <dbReference type="ChEBI" id="CHEBI:58349"/>
        <dbReference type="ChEBI" id="CHEBI:62192"/>
    </reaction>
</comment>
<comment type="subunit">
    <text evidence="1">NDH-1 can be composed of about 15 different subunits; different subcomplexes with different compositions have been identified which probably have different functions.</text>
</comment>
<comment type="subcellular location">
    <subcellularLocation>
        <location evidence="1">Cellular thylakoid membrane</location>
        <topology evidence="1">Multi-pass membrane protein</topology>
    </subcellularLocation>
</comment>
<comment type="similarity">
    <text evidence="1">Belongs to the complex I NdhL subunit family.</text>
</comment>
<accession>Q5N326</accession>
<accession>Q56009</accession>
<gene>
    <name evidence="1" type="primary">ndhL</name>
    <name type="ordered locus">syc1104_d</name>
</gene>
<proteinExistence type="inferred from homology"/>